<reference key="1">
    <citation type="journal article" date="2005" name="Science">
        <title>The transcriptional landscape of the mammalian genome.</title>
        <authorList>
            <person name="Carninci P."/>
            <person name="Kasukawa T."/>
            <person name="Katayama S."/>
            <person name="Gough J."/>
            <person name="Frith M.C."/>
            <person name="Maeda N."/>
            <person name="Oyama R."/>
            <person name="Ravasi T."/>
            <person name="Lenhard B."/>
            <person name="Wells C."/>
            <person name="Kodzius R."/>
            <person name="Shimokawa K."/>
            <person name="Bajic V.B."/>
            <person name="Brenner S.E."/>
            <person name="Batalov S."/>
            <person name="Forrest A.R."/>
            <person name="Zavolan M."/>
            <person name="Davis M.J."/>
            <person name="Wilming L.G."/>
            <person name="Aidinis V."/>
            <person name="Allen J.E."/>
            <person name="Ambesi-Impiombato A."/>
            <person name="Apweiler R."/>
            <person name="Aturaliya R.N."/>
            <person name="Bailey T.L."/>
            <person name="Bansal M."/>
            <person name="Baxter L."/>
            <person name="Beisel K.W."/>
            <person name="Bersano T."/>
            <person name="Bono H."/>
            <person name="Chalk A.M."/>
            <person name="Chiu K.P."/>
            <person name="Choudhary V."/>
            <person name="Christoffels A."/>
            <person name="Clutterbuck D.R."/>
            <person name="Crowe M.L."/>
            <person name="Dalla E."/>
            <person name="Dalrymple B.P."/>
            <person name="de Bono B."/>
            <person name="Della Gatta G."/>
            <person name="di Bernardo D."/>
            <person name="Down T."/>
            <person name="Engstrom P."/>
            <person name="Fagiolini M."/>
            <person name="Faulkner G."/>
            <person name="Fletcher C.F."/>
            <person name="Fukushima T."/>
            <person name="Furuno M."/>
            <person name="Futaki S."/>
            <person name="Gariboldi M."/>
            <person name="Georgii-Hemming P."/>
            <person name="Gingeras T.R."/>
            <person name="Gojobori T."/>
            <person name="Green R.E."/>
            <person name="Gustincich S."/>
            <person name="Harbers M."/>
            <person name="Hayashi Y."/>
            <person name="Hensch T.K."/>
            <person name="Hirokawa N."/>
            <person name="Hill D."/>
            <person name="Huminiecki L."/>
            <person name="Iacono M."/>
            <person name="Ikeo K."/>
            <person name="Iwama A."/>
            <person name="Ishikawa T."/>
            <person name="Jakt M."/>
            <person name="Kanapin A."/>
            <person name="Katoh M."/>
            <person name="Kawasawa Y."/>
            <person name="Kelso J."/>
            <person name="Kitamura H."/>
            <person name="Kitano H."/>
            <person name="Kollias G."/>
            <person name="Krishnan S.P."/>
            <person name="Kruger A."/>
            <person name="Kummerfeld S.K."/>
            <person name="Kurochkin I.V."/>
            <person name="Lareau L.F."/>
            <person name="Lazarevic D."/>
            <person name="Lipovich L."/>
            <person name="Liu J."/>
            <person name="Liuni S."/>
            <person name="McWilliam S."/>
            <person name="Madan Babu M."/>
            <person name="Madera M."/>
            <person name="Marchionni L."/>
            <person name="Matsuda H."/>
            <person name="Matsuzawa S."/>
            <person name="Miki H."/>
            <person name="Mignone F."/>
            <person name="Miyake S."/>
            <person name="Morris K."/>
            <person name="Mottagui-Tabar S."/>
            <person name="Mulder N."/>
            <person name="Nakano N."/>
            <person name="Nakauchi H."/>
            <person name="Ng P."/>
            <person name="Nilsson R."/>
            <person name="Nishiguchi S."/>
            <person name="Nishikawa S."/>
            <person name="Nori F."/>
            <person name="Ohara O."/>
            <person name="Okazaki Y."/>
            <person name="Orlando V."/>
            <person name="Pang K.C."/>
            <person name="Pavan W.J."/>
            <person name="Pavesi G."/>
            <person name="Pesole G."/>
            <person name="Petrovsky N."/>
            <person name="Piazza S."/>
            <person name="Reed J."/>
            <person name="Reid J.F."/>
            <person name="Ring B.Z."/>
            <person name="Ringwald M."/>
            <person name="Rost B."/>
            <person name="Ruan Y."/>
            <person name="Salzberg S.L."/>
            <person name="Sandelin A."/>
            <person name="Schneider C."/>
            <person name="Schoenbach C."/>
            <person name="Sekiguchi K."/>
            <person name="Semple C.A."/>
            <person name="Seno S."/>
            <person name="Sessa L."/>
            <person name="Sheng Y."/>
            <person name="Shibata Y."/>
            <person name="Shimada H."/>
            <person name="Shimada K."/>
            <person name="Silva D."/>
            <person name="Sinclair B."/>
            <person name="Sperling S."/>
            <person name="Stupka E."/>
            <person name="Sugiura K."/>
            <person name="Sultana R."/>
            <person name="Takenaka Y."/>
            <person name="Taki K."/>
            <person name="Tammoja K."/>
            <person name="Tan S.L."/>
            <person name="Tang S."/>
            <person name="Taylor M.S."/>
            <person name="Tegner J."/>
            <person name="Teichmann S.A."/>
            <person name="Ueda H.R."/>
            <person name="van Nimwegen E."/>
            <person name="Verardo R."/>
            <person name="Wei C.L."/>
            <person name="Yagi K."/>
            <person name="Yamanishi H."/>
            <person name="Zabarovsky E."/>
            <person name="Zhu S."/>
            <person name="Zimmer A."/>
            <person name="Hide W."/>
            <person name="Bult C."/>
            <person name="Grimmond S.M."/>
            <person name="Teasdale R.D."/>
            <person name="Liu E.T."/>
            <person name="Brusic V."/>
            <person name="Quackenbush J."/>
            <person name="Wahlestedt C."/>
            <person name="Mattick J.S."/>
            <person name="Hume D.A."/>
            <person name="Kai C."/>
            <person name="Sasaki D."/>
            <person name="Tomaru Y."/>
            <person name="Fukuda S."/>
            <person name="Kanamori-Katayama M."/>
            <person name="Suzuki M."/>
            <person name="Aoki J."/>
            <person name="Arakawa T."/>
            <person name="Iida J."/>
            <person name="Imamura K."/>
            <person name="Itoh M."/>
            <person name="Kato T."/>
            <person name="Kawaji H."/>
            <person name="Kawagashira N."/>
            <person name="Kawashima T."/>
            <person name="Kojima M."/>
            <person name="Kondo S."/>
            <person name="Konno H."/>
            <person name="Nakano K."/>
            <person name="Ninomiya N."/>
            <person name="Nishio T."/>
            <person name="Okada M."/>
            <person name="Plessy C."/>
            <person name="Shibata K."/>
            <person name="Shiraki T."/>
            <person name="Suzuki S."/>
            <person name="Tagami M."/>
            <person name="Waki K."/>
            <person name="Watahiki A."/>
            <person name="Okamura-Oho Y."/>
            <person name="Suzuki H."/>
            <person name="Kawai J."/>
            <person name="Hayashizaki Y."/>
        </authorList>
    </citation>
    <scope>NUCLEOTIDE SEQUENCE [LARGE SCALE MRNA]</scope>
    <source>
        <strain>C57BL/6J</strain>
        <tissue>Testis</tissue>
    </source>
</reference>
<reference key="2">
    <citation type="journal article" date="2004" name="Genome Res.">
        <title>The status, quality, and expansion of the NIH full-length cDNA project: the Mammalian Gene Collection (MGC).</title>
        <authorList>
            <consortium name="The MGC Project Team"/>
        </authorList>
    </citation>
    <scope>NUCLEOTIDE SEQUENCE [LARGE SCALE MRNA]</scope>
    <source>
        <tissue>Testis</tissue>
    </source>
</reference>
<reference key="3">
    <citation type="journal article" date="2015" name="Mol. Reprod. Dev.">
        <title>TMEM225: a possible protein phosphatase 1gamma2 (PP1gamma2) regulator localizes to the equatorial segment in mouse spermatozoa.</title>
        <authorList>
            <person name="Matsuura M."/>
            <person name="Yogo K."/>
        </authorList>
    </citation>
    <scope>FUNCTION</scope>
    <scope>INTERACTION WITH PPP1CC</scope>
    <scope>SUBCELLULAR LOCATION</scope>
    <scope>TISSUE SPECIFICITY</scope>
    <scope>DEVELOPMENTAL STAGE</scope>
    <scope>MUTAGENESIS OF 224-ARG--TRP-228</scope>
</reference>
<dbReference type="EMBL" id="AK006538">
    <property type="protein sequence ID" value="BAB24641.1"/>
    <property type="molecule type" value="mRNA"/>
</dbReference>
<dbReference type="EMBL" id="BC116869">
    <property type="protein sequence ID" value="AAI16870.1"/>
    <property type="molecule type" value="mRNA"/>
</dbReference>
<dbReference type="EMBL" id="BC116871">
    <property type="protein sequence ID" value="AAI16872.1"/>
    <property type="molecule type" value="mRNA"/>
</dbReference>
<dbReference type="CCDS" id="CCDS52774.1"/>
<dbReference type="RefSeq" id="NP_083655.1">
    <property type="nucleotide sequence ID" value="NM_029379.1"/>
</dbReference>
<dbReference type="SMR" id="Q9D9S2"/>
<dbReference type="FunCoup" id="Q9D9S2">
    <property type="interactions" value="15"/>
</dbReference>
<dbReference type="STRING" id="10090.ENSMUSP00000036816"/>
<dbReference type="PhosphoSitePlus" id="Q9D9S2"/>
<dbReference type="SwissPalm" id="Q9D9S2"/>
<dbReference type="PaxDb" id="10090-ENSMUSP00000036816"/>
<dbReference type="ProteomicsDB" id="259554"/>
<dbReference type="Antibodypedia" id="18955">
    <property type="antibodies" value="2 antibodies from 2 providers"/>
</dbReference>
<dbReference type="Ensembl" id="ENSMUST00000046333.9">
    <property type="protein sequence ID" value="ENSMUSP00000036816.8"/>
    <property type="gene ID" value="ENSMUSG00000040541.9"/>
</dbReference>
<dbReference type="GeneID" id="75667"/>
<dbReference type="KEGG" id="mmu:75667"/>
<dbReference type="UCSC" id="uc009oze.2">
    <property type="organism name" value="mouse"/>
</dbReference>
<dbReference type="AGR" id="MGI:1922917"/>
<dbReference type="CTD" id="338661"/>
<dbReference type="MGI" id="MGI:1922917">
    <property type="gene designation" value="Tmem225"/>
</dbReference>
<dbReference type="VEuPathDB" id="HostDB:ENSMUSG00000040541"/>
<dbReference type="eggNOG" id="ENOG502TDTU">
    <property type="taxonomic scope" value="Eukaryota"/>
</dbReference>
<dbReference type="GeneTree" id="ENSGT00390000011564"/>
<dbReference type="HOGENOM" id="CLU_074600_0_0_1"/>
<dbReference type="InParanoid" id="Q9D9S2"/>
<dbReference type="OMA" id="KMNHSPW"/>
<dbReference type="OrthoDB" id="9833398at2759"/>
<dbReference type="PhylomeDB" id="Q9D9S2"/>
<dbReference type="TreeFam" id="TF339613"/>
<dbReference type="BioGRID-ORCS" id="75667">
    <property type="hits" value="1 hit in 77 CRISPR screens"/>
</dbReference>
<dbReference type="PRO" id="PR:Q9D9S2"/>
<dbReference type="Proteomes" id="UP000000589">
    <property type="component" value="Chromosome 9"/>
</dbReference>
<dbReference type="RNAct" id="Q9D9S2">
    <property type="molecule type" value="protein"/>
</dbReference>
<dbReference type="Bgee" id="ENSMUSG00000040541">
    <property type="expression patterns" value="Expressed in spermatid and 5 other cell types or tissues"/>
</dbReference>
<dbReference type="ExpressionAtlas" id="Q9D9S2">
    <property type="expression patterns" value="baseline and differential"/>
</dbReference>
<dbReference type="GO" id="GO:0002079">
    <property type="term" value="C:inner acrosomal membrane"/>
    <property type="evidence" value="ECO:0000314"/>
    <property type="project" value="MGI"/>
</dbReference>
<dbReference type="GO" id="GO:0002081">
    <property type="term" value="C:outer acrosomal membrane"/>
    <property type="evidence" value="ECO:0000314"/>
    <property type="project" value="MGI"/>
</dbReference>
<dbReference type="GO" id="GO:0008157">
    <property type="term" value="F:protein phosphatase 1 binding"/>
    <property type="evidence" value="ECO:0000353"/>
    <property type="project" value="MGI"/>
</dbReference>
<dbReference type="GO" id="GO:0004864">
    <property type="term" value="F:protein phosphatase inhibitor activity"/>
    <property type="evidence" value="ECO:0000314"/>
    <property type="project" value="MGI"/>
</dbReference>
<dbReference type="InterPro" id="IPR033542">
    <property type="entry name" value="TMEM225"/>
</dbReference>
<dbReference type="PANTHER" id="PTHR36477">
    <property type="entry name" value="TRANSMEMBRANE PROTEIN 225"/>
    <property type="match status" value="1"/>
</dbReference>
<dbReference type="PANTHER" id="PTHR36477:SF1">
    <property type="entry name" value="TRANSMEMBRANE PROTEIN 225"/>
    <property type="match status" value="1"/>
</dbReference>
<dbReference type="Pfam" id="PF25452">
    <property type="entry name" value="TM225"/>
    <property type="match status" value="1"/>
</dbReference>
<organism>
    <name type="scientific">Mus musculus</name>
    <name type="common">Mouse</name>
    <dbReference type="NCBI Taxonomy" id="10090"/>
    <lineage>
        <taxon>Eukaryota</taxon>
        <taxon>Metazoa</taxon>
        <taxon>Chordata</taxon>
        <taxon>Craniata</taxon>
        <taxon>Vertebrata</taxon>
        <taxon>Euteleostomi</taxon>
        <taxon>Mammalia</taxon>
        <taxon>Eutheria</taxon>
        <taxon>Euarchontoglires</taxon>
        <taxon>Glires</taxon>
        <taxon>Rodentia</taxon>
        <taxon>Myomorpha</taxon>
        <taxon>Muroidea</taxon>
        <taxon>Muridae</taxon>
        <taxon>Murinae</taxon>
        <taxon>Mus</taxon>
        <taxon>Mus</taxon>
    </lineage>
</organism>
<accession>Q9D9S2</accession>
<sequence>MMHIPNRSIQAANIFFSSGAILLLIVGLIMEDWVELIPKVRKDKTTHSPWLGCCPPFWPEESLEVVRRIMRMTLNISIYLNLIIGLQFSYMISQNKCVHLLVGFLSFFAGCLLFYAIIVYHHKLNKGQYVYFVNYKTKWIAFTVYLTIALFLTCGIFCFIQSTNRCECMKFCIPHTESKSQEMIPSTIEVVSLPPRCAMPRSIVHVHSVTSKDGSLNRPHTQARRVTWAL</sequence>
<evidence type="ECO:0000255" key="1"/>
<evidence type="ECO:0000269" key="2">
    <source>
    </source>
</evidence>
<evidence type="ECO:0000305" key="3"/>
<name>TM225_MOUSE</name>
<protein>
    <recommendedName>
        <fullName>Transmembrane protein 225</fullName>
    </recommendedName>
</protein>
<gene>
    <name type="primary">Tmem225</name>
    <name type="synonym">Pmp22cd</name>
</gene>
<feature type="chain" id="PRO_0000339351" description="Transmembrane protein 225">
    <location>
        <begin position="1"/>
        <end position="230"/>
    </location>
</feature>
<feature type="topological domain" description="Cytoplasmic" evidence="3">
    <location>
        <begin position="1"/>
        <end position="8"/>
    </location>
</feature>
<feature type="transmembrane region" description="Helical" evidence="1">
    <location>
        <begin position="9"/>
        <end position="29"/>
    </location>
</feature>
<feature type="topological domain" description="Extracellular" evidence="3">
    <location>
        <begin position="30"/>
        <end position="71"/>
    </location>
</feature>
<feature type="transmembrane region" description="Helical" evidence="1">
    <location>
        <begin position="72"/>
        <end position="92"/>
    </location>
</feature>
<feature type="topological domain" description="Cytoplasmic" evidence="3">
    <location>
        <begin position="93"/>
        <end position="99"/>
    </location>
</feature>
<feature type="transmembrane region" description="Helical" evidence="1">
    <location>
        <begin position="100"/>
        <end position="120"/>
    </location>
</feature>
<feature type="topological domain" description="Extracellular" evidence="3">
    <location>
        <begin position="121"/>
        <end position="139"/>
    </location>
</feature>
<feature type="transmembrane region" description="Helical" evidence="1">
    <location>
        <begin position="140"/>
        <end position="160"/>
    </location>
</feature>
<feature type="topological domain" description="Cytoplasmic" evidence="3">
    <location>
        <begin position="161"/>
        <end position="230"/>
    </location>
</feature>
<feature type="short sequence motif" description="RVxF" evidence="2">
    <location>
        <begin position="224"/>
        <end position="228"/>
    </location>
</feature>
<feature type="mutagenesis site" description="Abolishes interaction with PPP1CC." evidence="2">
    <location>
        <begin position="224"/>
        <end position="228"/>
    </location>
</feature>
<keyword id="KW-0968">Cytoplasmic vesicle</keyword>
<keyword id="KW-0472">Membrane</keyword>
<keyword id="KW-1185">Reference proteome</keyword>
<keyword id="KW-0812">Transmembrane</keyword>
<keyword id="KW-1133">Transmembrane helix</keyword>
<proteinExistence type="evidence at protein level"/>
<comment type="function">
    <text evidence="2">Probably inhibits protein phosphatase 1 (PP1) in sperm via binding to catalytic subunit PPP1CC.</text>
</comment>
<comment type="subunit">
    <text evidence="2">Interacts (via RVxF motif) with PPP1CC.</text>
</comment>
<comment type="subcellular location">
    <subcellularLocation>
        <location evidence="2">Cytoplasmic vesicle</location>
        <location evidence="2">Secretory vesicle</location>
        <location evidence="2">Acrosome membrane</location>
        <topology evidence="1">Multi-pass membrane protein</topology>
    </subcellularLocation>
</comment>
<comment type="tissue specificity">
    <text evidence="2">Expressed in testis, epididymis and spermatozoa (at protein level). Not expressed in brain, heart, lung, liver, spleen, kidney and skeletal muscle.</text>
</comment>
<comment type="developmental stage">
    <text evidence="2">Detected in testis 25 days after birth and thereafter.</text>
</comment>
<comment type="caution">
    <text evidence="3">This protein is not related to the claudin family.</text>
</comment>